<organism>
    <name type="scientific">Lachancea kluyveri (strain ATCC 58438 / CBS 3082 / BCRC 21498 / NBRC 1685 / JCM 7257 / NCYC 543 / NRRL Y-12651)</name>
    <name type="common">Yeast</name>
    <name type="synonym">Saccharomyces kluyveri</name>
    <dbReference type="NCBI Taxonomy" id="226302"/>
    <lineage>
        <taxon>Eukaryota</taxon>
        <taxon>Fungi</taxon>
        <taxon>Dikarya</taxon>
        <taxon>Ascomycota</taxon>
        <taxon>Saccharomycotina</taxon>
        <taxon>Saccharomycetes</taxon>
        <taxon>Saccharomycetales</taxon>
        <taxon>Saccharomycetaceae</taxon>
        <taxon>Lachancea</taxon>
    </lineage>
</organism>
<dbReference type="EC" id="7.1.1.9"/>
<dbReference type="EMBL" id="AF120717">
    <property type="protein sequence ID" value="AAD29124.1"/>
    <property type="molecule type" value="Genomic_DNA"/>
</dbReference>
<dbReference type="RefSeq" id="YP_006460460.1">
    <property type="nucleotide sequence ID" value="NC_018056.1"/>
</dbReference>
<dbReference type="SMR" id="Q9XLX0"/>
<dbReference type="GeneID" id="13083823"/>
<dbReference type="GO" id="GO:0005743">
    <property type="term" value="C:mitochondrial inner membrane"/>
    <property type="evidence" value="ECO:0007669"/>
    <property type="project" value="UniProtKB-SubCell"/>
</dbReference>
<dbReference type="GO" id="GO:0004129">
    <property type="term" value="F:cytochrome-c oxidase activity"/>
    <property type="evidence" value="ECO:0007669"/>
    <property type="project" value="UniProtKB-EC"/>
</dbReference>
<dbReference type="GO" id="GO:0006123">
    <property type="term" value="P:mitochondrial electron transport, cytochrome c to oxygen"/>
    <property type="evidence" value="ECO:0007669"/>
    <property type="project" value="TreeGrafter"/>
</dbReference>
<dbReference type="CDD" id="cd01665">
    <property type="entry name" value="Cyt_c_Oxidase_III"/>
    <property type="match status" value="1"/>
</dbReference>
<dbReference type="FunFam" id="1.10.287.70:FF:000082">
    <property type="entry name" value="Cytochrome c oxidase subunit 3"/>
    <property type="match status" value="1"/>
</dbReference>
<dbReference type="FunFam" id="1.20.120.80:FF:000002">
    <property type="entry name" value="Cytochrome c oxidase subunit 3"/>
    <property type="match status" value="1"/>
</dbReference>
<dbReference type="Gene3D" id="1.10.287.70">
    <property type="match status" value="1"/>
</dbReference>
<dbReference type="Gene3D" id="1.20.120.80">
    <property type="entry name" value="Cytochrome c oxidase, subunit III, four-helix bundle"/>
    <property type="match status" value="1"/>
</dbReference>
<dbReference type="InterPro" id="IPR024791">
    <property type="entry name" value="Cyt_c/ubiquinol_Oxase_su3"/>
</dbReference>
<dbReference type="InterPro" id="IPR033945">
    <property type="entry name" value="Cyt_c_oxase_su3_dom"/>
</dbReference>
<dbReference type="InterPro" id="IPR000298">
    <property type="entry name" value="Cyt_c_oxidase-like_su3"/>
</dbReference>
<dbReference type="InterPro" id="IPR035973">
    <property type="entry name" value="Cyt_c_oxidase_su3-like_sf"/>
</dbReference>
<dbReference type="InterPro" id="IPR013833">
    <property type="entry name" value="Cyt_c_oxidase_su3_a-hlx"/>
</dbReference>
<dbReference type="PANTHER" id="PTHR11403:SF7">
    <property type="entry name" value="CYTOCHROME C OXIDASE SUBUNIT 3"/>
    <property type="match status" value="1"/>
</dbReference>
<dbReference type="PANTHER" id="PTHR11403">
    <property type="entry name" value="CYTOCHROME C OXIDASE SUBUNIT III"/>
    <property type="match status" value="1"/>
</dbReference>
<dbReference type="Pfam" id="PF00510">
    <property type="entry name" value="COX3"/>
    <property type="match status" value="1"/>
</dbReference>
<dbReference type="SUPFAM" id="SSF81452">
    <property type="entry name" value="Cytochrome c oxidase subunit III-like"/>
    <property type="match status" value="1"/>
</dbReference>
<dbReference type="PROSITE" id="PS50253">
    <property type="entry name" value="COX3"/>
    <property type="match status" value="1"/>
</dbReference>
<protein>
    <recommendedName>
        <fullName>Cytochrome c oxidase subunit 3</fullName>
        <ecNumber>7.1.1.9</ecNumber>
    </recommendedName>
    <alternativeName>
        <fullName>Cytochrome c oxidase polypeptide III</fullName>
    </alternativeName>
</protein>
<reference key="1">
    <citation type="journal article" date="2000" name="Genetics">
        <title>Highly diverged homologs of Saccharomyces cerevisiae mitochondrial mRNA-specific translational activators have orthologous functions in other budding yeasts.</title>
        <authorList>
            <person name="Costanzo M.C."/>
            <person name="Bonnefoy N."/>
            <person name="Williams E.H."/>
            <person name="Clark-Walker G.D."/>
            <person name="Fox T.D."/>
        </authorList>
    </citation>
    <scope>NUCLEOTIDE SEQUENCE [GENOMIC DNA]</scope>
    <source>
        <strain>ATCC 58438 / CBS 3082 / BCRC 21498 / NBRC 1685 / JCM 7257 / NCYC 543 / NRRL Y-12651</strain>
    </source>
</reference>
<feature type="chain" id="PRO_0000183848" description="Cytochrome c oxidase subunit 3">
    <location>
        <begin position="1"/>
        <end position="269"/>
    </location>
</feature>
<feature type="transmembrane region" description="Helical" evidence="2">
    <location>
        <begin position="21"/>
        <end position="41"/>
    </location>
</feature>
<feature type="transmembrane region" description="Helical" evidence="2">
    <location>
        <begin position="45"/>
        <end position="65"/>
    </location>
</feature>
<feature type="transmembrane region" description="Helical" evidence="2">
    <location>
        <begin position="90"/>
        <end position="110"/>
    </location>
</feature>
<feature type="transmembrane region" description="Helical" evidence="2">
    <location>
        <begin position="138"/>
        <end position="160"/>
    </location>
</feature>
<feature type="transmembrane region" description="Helical" evidence="2">
    <location>
        <begin position="167"/>
        <end position="187"/>
    </location>
</feature>
<feature type="transmembrane region" description="Helical" evidence="2">
    <location>
        <begin position="205"/>
        <end position="225"/>
    </location>
</feature>
<feature type="transmembrane region" description="Helical" evidence="2">
    <location>
        <begin position="247"/>
        <end position="267"/>
    </location>
</feature>
<name>COX3_LACK1</name>
<accession>Q9XLX0</accession>
<evidence type="ECO:0000250" key="1">
    <source>
        <dbReference type="UniProtKB" id="P00420"/>
    </source>
</evidence>
<evidence type="ECO:0000255" key="2"/>
<evidence type="ECO:0000305" key="3"/>
<sequence>MTHLERSRHQQFPFHLVAPSPWPIVVSFSLLSLALSLALAMHGYIGNMNLVWLALFVLTSSATLWFRDIIAEATYLGDHTIAVRKGINLGFLLFVVSEVLIFAGLFWAYFHSAMSPTIELGGVWPPVGIEAVQPTELPLLNTIILLASGATVTYSHHALIQGNRKDALSGLFITTWLIIIFVICQYIEYTNATFTISDGVYGSVFYAGTGLHFLHMVMLATMLAINYWRLRNYHLTSSHHVGYETTVIYLHVLDIIWLFLYIVFYWWGV</sequence>
<geneLocation type="mitochondrion"/>
<comment type="function">
    <text evidence="1">Component of the cytochrome c oxidase, the last enzyme in the mitochondrial electron transport chain which drives oxidative phosphorylation. The respiratory chain contains 3 multisubunit complexes succinate dehydrogenase (complex II, CII), ubiquinol-cytochrome c oxidoreductase (cytochrome b-c1 complex, complex III, CIII) and cytochrome c oxidase (complex IV, CIV), that cooperate to transfer electrons derived from NADH and succinate to molecular oxygen, creating an electrochemical gradient over the inner membrane that drives transmembrane transport and the ATP synthase. Cytochrome c oxidase is the component of the respiratory chain that catalyzes the reduction of oxygen to water. Electrons originating from reduced cytochrome c in the intermembrane space (IMS) are transferred via the dinuclear copper A center (CU(A)) of subunit 2 and heme A of subunit 1 to the active site in subunit 1, a binuclear center (BNC) formed by heme A3 and copper B (CU(B)). The BNC reduces molecular oxygen to 2 water molecules using 4 electrons from cytochrome c in the IMS and 4 protons from the mitochondrial matrix.</text>
</comment>
<comment type="catalytic activity">
    <reaction evidence="1">
        <text>4 Fe(II)-[cytochrome c] + O2 + 8 H(+)(in) = 4 Fe(III)-[cytochrome c] + 2 H2O + 4 H(+)(out)</text>
        <dbReference type="Rhea" id="RHEA:11436"/>
        <dbReference type="Rhea" id="RHEA-COMP:10350"/>
        <dbReference type="Rhea" id="RHEA-COMP:14399"/>
        <dbReference type="ChEBI" id="CHEBI:15377"/>
        <dbReference type="ChEBI" id="CHEBI:15378"/>
        <dbReference type="ChEBI" id="CHEBI:15379"/>
        <dbReference type="ChEBI" id="CHEBI:29033"/>
        <dbReference type="ChEBI" id="CHEBI:29034"/>
        <dbReference type="EC" id="7.1.1.9"/>
    </reaction>
    <physiologicalReaction direction="left-to-right" evidence="1">
        <dbReference type="Rhea" id="RHEA:11437"/>
    </physiologicalReaction>
</comment>
<comment type="subunit">
    <text evidence="1">Component of the cytochrome c oxidase (complex IV, CIV), a multisubunit enzyme composed of a catalytic core of 3 subunits and several supernumerary subunits. The complex exists as a monomer or a dimer and forms supercomplexes (SCs) in the inner mitochondrial membrane with ubiquinol-cytochrome c oxidoreductase (cytochrome b-c1 complex, complex III, CIII).</text>
</comment>
<comment type="subcellular location">
    <subcellularLocation>
        <location evidence="1">Mitochondrion inner membrane</location>
        <topology evidence="1">Multi-pass membrane protein</topology>
    </subcellularLocation>
</comment>
<comment type="similarity">
    <text evidence="3">Belongs to the cytochrome c oxidase subunit 3 family.</text>
</comment>
<gene>
    <name type="primary">COX3</name>
</gene>
<keyword id="KW-0472">Membrane</keyword>
<keyword id="KW-0496">Mitochondrion</keyword>
<keyword id="KW-0999">Mitochondrion inner membrane</keyword>
<keyword id="KW-1278">Translocase</keyword>
<keyword id="KW-0812">Transmembrane</keyword>
<keyword id="KW-1133">Transmembrane helix</keyword>
<proteinExistence type="inferred from homology"/>